<gene>
    <name evidence="2" type="primary">SAUR64</name>
    <name evidence="4" type="ordered locus">At1g29450</name>
    <name evidence="5" type="ORF">F15D2.4</name>
</gene>
<comment type="function">
    <text evidence="1">May promote auxin-stimulated organ elongation, such as hypocotyls, stamen filaments and petals.</text>
</comment>
<comment type="subcellular location">
    <subcellularLocation>
        <location evidence="1">Cell membrane</location>
        <topology evidence="1">Peripheral membrane protein</topology>
    </subcellularLocation>
</comment>
<comment type="similarity">
    <text evidence="3">Belongs to the ARG7 family.</text>
</comment>
<comment type="sequence caution" evidence="3">
    <conflict type="erroneous initiation">
        <sequence resource="EMBL-CDS" id="AAG51748"/>
    </conflict>
    <text>Truncated N-terminus.</text>
</comment>
<name>SAU64_ARATH</name>
<evidence type="ECO:0000250" key="1">
    <source>
        <dbReference type="UniProtKB" id="F4I1H5"/>
    </source>
</evidence>
<evidence type="ECO:0000303" key="2">
    <source>
    </source>
</evidence>
<evidence type="ECO:0000305" key="3"/>
<evidence type="ECO:0000312" key="4">
    <source>
        <dbReference type="Araport" id="AT1G29450"/>
    </source>
</evidence>
<evidence type="ECO:0000312" key="5">
    <source>
        <dbReference type="EMBL" id="AAG51748.1"/>
    </source>
</evidence>
<dbReference type="EMBL" id="AC068667">
    <property type="protein sequence ID" value="AAG51748.1"/>
    <property type="status" value="ALT_INIT"/>
    <property type="molecule type" value="Genomic_DNA"/>
</dbReference>
<dbReference type="EMBL" id="CP002684">
    <property type="protein sequence ID" value="AEE31090.1"/>
    <property type="molecule type" value="Genomic_DNA"/>
</dbReference>
<dbReference type="EMBL" id="CP002684">
    <property type="protein sequence ID" value="ANM59639.1"/>
    <property type="molecule type" value="Genomic_DNA"/>
</dbReference>
<dbReference type="EMBL" id="BT026425">
    <property type="protein sequence ID" value="ABH04532.1"/>
    <property type="molecule type" value="mRNA"/>
</dbReference>
<dbReference type="EMBL" id="AY086957">
    <property type="protein sequence ID" value="AAM64520.1"/>
    <property type="molecule type" value="mRNA"/>
</dbReference>
<dbReference type="PIR" id="C86417">
    <property type="entry name" value="C86417"/>
</dbReference>
<dbReference type="RefSeq" id="NP_001319107.1">
    <property type="nucleotide sequence ID" value="NM_001332859.1"/>
</dbReference>
<dbReference type="RefSeq" id="NP_564329.1">
    <property type="nucleotide sequence ID" value="NM_102685.3"/>
</dbReference>
<dbReference type="FunCoup" id="Q0V7Z5">
    <property type="interactions" value="63"/>
</dbReference>
<dbReference type="STRING" id="3702.Q0V7Z5"/>
<dbReference type="PaxDb" id="3702-AT1G29450.1"/>
<dbReference type="ProMEX" id="Q0V7Z5"/>
<dbReference type="EnsemblPlants" id="AT1G29450.1">
    <property type="protein sequence ID" value="AT1G29450.1"/>
    <property type="gene ID" value="AT1G29450"/>
</dbReference>
<dbReference type="EnsemblPlants" id="AT1G29450.2">
    <property type="protein sequence ID" value="AT1G29450.2"/>
    <property type="gene ID" value="AT1G29450"/>
</dbReference>
<dbReference type="GeneID" id="839821"/>
<dbReference type="Gramene" id="AT1G29450.1">
    <property type="protein sequence ID" value="AT1G29450.1"/>
    <property type="gene ID" value="AT1G29450"/>
</dbReference>
<dbReference type="Gramene" id="AT1G29450.2">
    <property type="protein sequence ID" value="AT1G29450.2"/>
    <property type="gene ID" value="AT1G29450"/>
</dbReference>
<dbReference type="KEGG" id="ath:AT1G29450"/>
<dbReference type="Araport" id="AT1G29450"/>
<dbReference type="TAIR" id="AT1G29450">
    <property type="gene designation" value="SAUR64"/>
</dbReference>
<dbReference type="eggNOG" id="ENOG502S4GQ">
    <property type="taxonomic scope" value="Eukaryota"/>
</dbReference>
<dbReference type="HOGENOM" id="CLU_090137_1_1_1"/>
<dbReference type="InParanoid" id="Q0V7Z5"/>
<dbReference type="OMA" id="VFMEYIL"/>
<dbReference type="PhylomeDB" id="Q0V7Z5"/>
<dbReference type="PRO" id="PR:Q0V7Z5"/>
<dbReference type="Proteomes" id="UP000006548">
    <property type="component" value="Chromosome 1"/>
</dbReference>
<dbReference type="ExpressionAtlas" id="Q0V7Z5">
    <property type="expression patterns" value="baseline and differential"/>
</dbReference>
<dbReference type="GO" id="GO:0005886">
    <property type="term" value="C:plasma membrane"/>
    <property type="evidence" value="ECO:0007669"/>
    <property type="project" value="UniProtKB-SubCell"/>
</dbReference>
<dbReference type="GO" id="GO:0009734">
    <property type="term" value="P:auxin-activated signaling pathway"/>
    <property type="evidence" value="ECO:0007669"/>
    <property type="project" value="UniProtKB-KW"/>
</dbReference>
<dbReference type="InterPro" id="IPR003676">
    <property type="entry name" value="SAUR_fam"/>
</dbReference>
<dbReference type="PANTHER" id="PTHR31175">
    <property type="entry name" value="AUXIN-RESPONSIVE FAMILY PROTEIN"/>
    <property type="match status" value="1"/>
</dbReference>
<dbReference type="PANTHER" id="PTHR31175:SF99">
    <property type="entry name" value="AUXIN-RESPONSIVE PROTEIN SAUR61-RELATED"/>
    <property type="match status" value="1"/>
</dbReference>
<dbReference type="Pfam" id="PF02519">
    <property type="entry name" value="Auxin_inducible"/>
    <property type="match status" value="1"/>
</dbReference>
<sequence>MMNTKKLIKMAKKWQQRAALHRKRISFQRSSSATSSTAAEKGCFVVYTTDSTRFAFPLSYLSNSVFQELLKISEEEFGLPTGGPITSPFDSVFLEYLIKLVQRRMDADTEKALLMSISSARCSSQCSLKLQERSTQQLLVF</sequence>
<keyword id="KW-0927">Auxin signaling pathway</keyword>
<keyword id="KW-1003">Cell membrane</keyword>
<keyword id="KW-0217">Developmental protein</keyword>
<keyword id="KW-0341">Growth regulation</keyword>
<keyword id="KW-0472">Membrane</keyword>
<keyword id="KW-1185">Reference proteome</keyword>
<reference key="1">
    <citation type="journal article" date="2000" name="Nature">
        <title>Sequence and analysis of chromosome 1 of the plant Arabidopsis thaliana.</title>
        <authorList>
            <person name="Theologis A."/>
            <person name="Ecker J.R."/>
            <person name="Palm C.J."/>
            <person name="Federspiel N.A."/>
            <person name="Kaul S."/>
            <person name="White O."/>
            <person name="Alonso J."/>
            <person name="Altafi H."/>
            <person name="Araujo R."/>
            <person name="Bowman C.L."/>
            <person name="Brooks S.Y."/>
            <person name="Buehler E."/>
            <person name="Chan A."/>
            <person name="Chao Q."/>
            <person name="Chen H."/>
            <person name="Cheuk R.F."/>
            <person name="Chin C.W."/>
            <person name="Chung M.K."/>
            <person name="Conn L."/>
            <person name="Conway A.B."/>
            <person name="Conway A.R."/>
            <person name="Creasy T.H."/>
            <person name="Dewar K."/>
            <person name="Dunn P."/>
            <person name="Etgu P."/>
            <person name="Feldblyum T.V."/>
            <person name="Feng J.-D."/>
            <person name="Fong B."/>
            <person name="Fujii C.Y."/>
            <person name="Gill J.E."/>
            <person name="Goldsmith A.D."/>
            <person name="Haas B."/>
            <person name="Hansen N.F."/>
            <person name="Hughes B."/>
            <person name="Huizar L."/>
            <person name="Hunter J.L."/>
            <person name="Jenkins J."/>
            <person name="Johnson-Hopson C."/>
            <person name="Khan S."/>
            <person name="Khaykin E."/>
            <person name="Kim C.J."/>
            <person name="Koo H.L."/>
            <person name="Kremenetskaia I."/>
            <person name="Kurtz D.B."/>
            <person name="Kwan A."/>
            <person name="Lam B."/>
            <person name="Langin-Hooper S."/>
            <person name="Lee A."/>
            <person name="Lee J.M."/>
            <person name="Lenz C.A."/>
            <person name="Li J.H."/>
            <person name="Li Y.-P."/>
            <person name="Lin X."/>
            <person name="Liu S.X."/>
            <person name="Liu Z.A."/>
            <person name="Luros J.S."/>
            <person name="Maiti R."/>
            <person name="Marziali A."/>
            <person name="Militscher J."/>
            <person name="Miranda M."/>
            <person name="Nguyen M."/>
            <person name="Nierman W.C."/>
            <person name="Osborne B.I."/>
            <person name="Pai G."/>
            <person name="Peterson J."/>
            <person name="Pham P.K."/>
            <person name="Rizzo M."/>
            <person name="Rooney T."/>
            <person name="Rowley D."/>
            <person name="Sakano H."/>
            <person name="Salzberg S.L."/>
            <person name="Schwartz J.R."/>
            <person name="Shinn P."/>
            <person name="Southwick A.M."/>
            <person name="Sun H."/>
            <person name="Tallon L.J."/>
            <person name="Tambunga G."/>
            <person name="Toriumi M.J."/>
            <person name="Town C.D."/>
            <person name="Utterback T."/>
            <person name="Van Aken S."/>
            <person name="Vaysberg M."/>
            <person name="Vysotskaia V.S."/>
            <person name="Walker M."/>
            <person name="Wu D."/>
            <person name="Yu G."/>
            <person name="Fraser C.M."/>
            <person name="Venter J.C."/>
            <person name="Davis R.W."/>
        </authorList>
    </citation>
    <scope>NUCLEOTIDE SEQUENCE [LARGE SCALE GENOMIC DNA]</scope>
    <source>
        <strain>cv. Columbia</strain>
    </source>
</reference>
<reference key="2">
    <citation type="journal article" date="2017" name="Plant J.">
        <title>Araport11: a complete reannotation of the Arabidopsis thaliana reference genome.</title>
        <authorList>
            <person name="Cheng C.Y."/>
            <person name="Krishnakumar V."/>
            <person name="Chan A.P."/>
            <person name="Thibaud-Nissen F."/>
            <person name="Schobel S."/>
            <person name="Town C.D."/>
        </authorList>
    </citation>
    <scope>GENOME REANNOTATION</scope>
    <source>
        <strain>cv. Columbia</strain>
    </source>
</reference>
<reference key="3">
    <citation type="submission" date="2006-08" db="EMBL/GenBank/DDBJ databases">
        <title>Arabidopsis ORF Clones.</title>
        <authorList>
            <person name="Quinitio C."/>
            <person name="Chen H."/>
            <person name="Kim C.J."/>
            <person name="Shinn P."/>
            <person name="Ecker J.R."/>
        </authorList>
    </citation>
    <scope>NUCLEOTIDE SEQUENCE [LARGE SCALE MRNA]</scope>
    <source>
        <strain>cv. Columbia</strain>
    </source>
</reference>
<reference key="4">
    <citation type="submission" date="2002-03" db="EMBL/GenBank/DDBJ databases">
        <title>Full-length cDNA from Arabidopsis thaliana.</title>
        <authorList>
            <person name="Brover V.V."/>
            <person name="Troukhan M.E."/>
            <person name="Alexandrov N.A."/>
            <person name="Lu Y.-P."/>
            <person name="Flavell R.B."/>
            <person name="Feldmann K.A."/>
        </authorList>
    </citation>
    <scope>NUCLEOTIDE SEQUENCE [LARGE SCALE MRNA]</scope>
</reference>
<reference key="5">
    <citation type="journal article" date="2002" name="Plant Mol. Biol.">
        <title>Auxin-responsive gene expression: genes, promoters and regulatory factors.</title>
        <authorList>
            <person name="Hagen G."/>
            <person name="Guilfoyle T.J."/>
        </authorList>
    </citation>
    <scope>GENE FAMILY</scope>
    <scope>NOMENCLATURE</scope>
</reference>
<proteinExistence type="evidence at transcript level"/>
<protein>
    <recommendedName>
        <fullName evidence="3">Auxin-responsive protein SAUR64</fullName>
    </recommendedName>
    <alternativeName>
        <fullName evidence="2">Protein SMALL AUXIN UP RNA 64</fullName>
    </alternativeName>
</protein>
<feature type="chain" id="PRO_0000433076" description="Auxin-responsive protein SAUR64">
    <location>
        <begin position="1"/>
        <end position="141"/>
    </location>
</feature>
<feature type="sequence conflict" description="In Ref. 4; AAM64520." evidence="3" ref="4">
    <original>S</original>
    <variation>L</variation>
    <location>
        <position position="87"/>
    </location>
</feature>
<organism>
    <name type="scientific">Arabidopsis thaliana</name>
    <name type="common">Mouse-ear cress</name>
    <dbReference type="NCBI Taxonomy" id="3702"/>
    <lineage>
        <taxon>Eukaryota</taxon>
        <taxon>Viridiplantae</taxon>
        <taxon>Streptophyta</taxon>
        <taxon>Embryophyta</taxon>
        <taxon>Tracheophyta</taxon>
        <taxon>Spermatophyta</taxon>
        <taxon>Magnoliopsida</taxon>
        <taxon>eudicotyledons</taxon>
        <taxon>Gunneridae</taxon>
        <taxon>Pentapetalae</taxon>
        <taxon>rosids</taxon>
        <taxon>malvids</taxon>
        <taxon>Brassicales</taxon>
        <taxon>Brassicaceae</taxon>
        <taxon>Camelineae</taxon>
        <taxon>Arabidopsis</taxon>
    </lineage>
</organism>
<accession>Q0V7Z5</accession>
<accession>Q8LBW5</accession>
<accession>Q9C7Q6</accession>